<accession>Q8FEI9</accession>
<reference key="1">
    <citation type="journal article" date="2002" name="Proc. Natl. Acad. Sci. U.S.A.">
        <title>Extensive mosaic structure revealed by the complete genome sequence of uropathogenic Escherichia coli.</title>
        <authorList>
            <person name="Welch R.A."/>
            <person name="Burland V."/>
            <person name="Plunkett G. III"/>
            <person name="Redford P."/>
            <person name="Roesch P."/>
            <person name="Rasko D."/>
            <person name="Buckles E.L."/>
            <person name="Liou S.-R."/>
            <person name="Boutin A."/>
            <person name="Hackett J."/>
            <person name="Stroud D."/>
            <person name="Mayhew G.F."/>
            <person name="Rose D.J."/>
            <person name="Zhou S."/>
            <person name="Schwartz D.C."/>
            <person name="Perna N.T."/>
            <person name="Mobley H.L.T."/>
            <person name="Donnenberg M.S."/>
            <person name="Blattner F.R."/>
        </authorList>
    </citation>
    <scope>NUCLEOTIDE SEQUENCE [LARGE SCALE GENOMIC DNA]</scope>
    <source>
        <strain>CFT073 / ATCC 700928 / UPEC</strain>
    </source>
</reference>
<protein>
    <recommendedName>
        <fullName evidence="2">Phosphoadenosine 5'-phosphosulfate reductase</fullName>
        <shortName evidence="2">PAPS reductase</shortName>
        <ecNumber evidence="2">1.8.4.8</ecNumber>
    </recommendedName>
    <alternativeName>
        <fullName evidence="2">3'-phosphoadenylylsulfate reductase</fullName>
    </alternativeName>
    <alternativeName>
        <fullName evidence="2">PAPS reductase, thioredoxin dependent</fullName>
    </alternativeName>
    <alternativeName>
        <fullName evidence="2">PAPS sulfotransferase</fullName>
    </alternativeName>
    <alternativeName>
        <fullName evidence="2">PAdoPS reductase</fullName>
    </alternativeName>
</protein>
<keyword id="KW-0963">Cytoplasm</keyword>
<keyword id="KW-0560">Oxidoreductase</keyword>
<keyword id="KW-1185">Reference proteome</keyword>
<comment type="function">
    <text evidence="2">Catalyzes the formation of sulfite from phosphoadenosine 5'-phosphosulfate (PAPS) using thioredoxin as an electron donor.</text>
</comment>
<comment type="catalytic activity">
    <reaction evidence="2">
        <text>[thioredoxin]-disulfide + sulfite + adenosine 3',5'-bisphosphate + 2 H(+) = [thioredoxin]-dithiol + 3'-phosphoadenylyl sulfate</text>
        <dbReference type="Rhea" id="RHEA:11724"/>
        <dbReference type="Rhea" id="RHEA-COMP:10698"/>
        <dbReference type="Rhea" id="RHEA-COMP:10700"/>
        <dbReference type="ChEBI" id="CHEBI:15378"/>
        <dbReference type="ChEBI" id="CHEBI:17359"/>
        <dbReference type="ChEBI" id="CHEBI:29950"/>
        <dbReference type="ChEBI" id="CHEBI:50058"/>
        <dbReference type="ChEBI" id="CHEBI:58339"/>
        <dbReference type="ChEBI" id="CHEBI:58343"/>
        <dbReference type="EC" id="1.8.4.8"/>
    </reaction>
</comment>
<comment type="pathway">
    <text evidence="2">Sulfur metabolism; hydrogen sulfide biosynthesis; sulfite from sulfate: step 3/3.</text>
</comment>
<comment type="subcellular location">
    <subcellularLocation>
        <location evidence="2">Cytoplasm</location>
    </subcellularLocation>
</comment>
<comment type="similarity">
    <text evidence="2">Belongs to the PAPS reductase family. CysH subfamily.</text>
</comment>
<dbReference type="EC" id="1.8.4.8" evidence="2"/>
<dbReference type="EMBL" id="AE014075">
    <property type="protein sequence ID" value="AAN81770.1"/>
    <property type="molecule type" value="Genomic_DNA"/>
</dbReference>
<dbReference type="RefSeq" id="WP_000039862.1">
    <property type="nucleotide sequence ID" value="NZ_CP051263.1"/>
</dbReference>
<dbReference type="SMR" id="Q8FEI9"/>
<dbReference type="STRING" id="199310.c3321"/>
<dbReference type="GeneID" id="75172844"/>
<dbReference type="KEGG" id="ecc:c3321"/>
<dbReference type="eggNOG" id="COG0175">
    <property type="taxonomic scope" value="Bacteria"/>
</dbReference>
<dbReference type="HOGENOM" id="CLU_044089_3_0_6"/>
<dbReference type="BioCyc" id="ECOL199310:C3321-MONOMER"/>
<dbReference type="UniPathway" id="UPA00140">
    <property type="reaction ID" value="UER00206"/>
</dbReference>
<dbReference type="Proteomes" id="UP000001410">
    <property type="component" value="Chromosome"/>
</dbReference>
<dbReference type="GO" id="GO:0005737">
    <property type="term" value="C:cytoplasm"/>
    <property type="evidence" value="ECO:0007669"/>
    <property type="project" value="UniProtKB-SubCell"/>
</dbReference>
<dbReference type="GO" id="GO:0004604">
    <property type="term" value="F:phosphoadenylyl-sulfate reductase (thioredoxin) activity"/>
    <property type="evidence" value="ECO:0007669"/>
    <property type="project" value="UniProtKB-UniRule"/>
</dbReference>
<dbReference type="GO" id="GO:0070814">
    <property type="term" value="P:hydrogen sulfide biosynthetic process"/>
    <property type="evidence" value="ECO:0007669"/>
    <property type="project" value="UniProtKB-UniRule"/>
</dbReference>
<dbReference type="GO" id="GO:0019379">
    <property type="term" value="P:sulfate assimilation, phosphoadenylyl sulfate reduction by phosphoadenylyl-sulfate reductase (thioredoxin)"/>
    <property type="evidence" value="ECO:0007669"/>
    <property type="project" value="UniProtKB-UniRule"/>
</dbReference>
<dbReference type="CDD" id="cd23945">
    <property type="entry name" value="PAPS_reductase"/>
    <property type="match status" value="1"/>
</dbReference>
<dbReference type="FunFam" id="3.40.50.620:FF:000043">
    <property type="entry name" value="Phosphoadenosine phosphosulfate reductase"/>
    <property type="match status" value="1"/>
</dbReference>
<dbReference type="Gene3D" id="3.40.50.620">
    <property type="entry name" value="HUPs"/>
    <property type="match status" value="1"/>
</dbReference>
<dbReference type="HAMAP" id="MF_00063">
    <property type="entry name" value="CysH"/>
    <property type="match status" value="1"/>
</dbReference>
<dbReference type="InterPro" id="IPR004511">
    <property type="entry name" value="PAPS/APS_Rdtase"/>
</dbReference>
<dbReference type="InterPro" id="IPR002500">
    <property type="entry name" value="PAPS_reduct_dom"/>
</dbReference>
<dbReference type="InterPro" id="IPR011800">
    <property type="entry name" value="PAPS_reductase_CysH"/>
</dbReference>
<dbReference type="InterPro" id="IPR014729">
    <property type="entry name" value="Rossmann-like_a/b/a_fold"/>
</dbReference>
<dbReference type="NCBIfam" id="TIGR00434">
    <property type="entry name" value="cysH"/>
    <property type="match status" value="1"/>
</dbReference>
<dbReference type="NCBIfam" id="TIGR02057">
    <property type="entry name" value="PAPS_reductase"/>
    <property type="match status" value="1"/>
</dbReference>
<dbReference type="NCBIfam" id="NF002537">
    <property type="entry name" value="PRK02090.1"/>
    <property type="match status" value="1"/>
</dbReference>
<dbReference type="PANTHER" id="PTHR46509">
    <property type="entry name" value="PHOSPHOADENOSINE PHOSPHOSULFATE REDUCTASE"/>
    <property type="match status" value="1"/>
</dbReference>
<dbReference type="PANTHER" id="PTHR46509:SF1">
    <property type="entry name" value="PHOSPHOADENOSINE PHOSPHOSULFATE REDUCTASE"/>
    <property type="match status" value="1"/>
</dbReference>
<dbReference type="Pfam" id="PF01507">
    <property type="entry name" value="PAPS_reduct"/>
    <property type="match status" value="1"/>
</dbReference>
<dbReference type="PIRSF" id="PIRSF000857">
    <property type="entry name" value="PAPS_reductase"/>
    <property type="match status" value="1"/>
</dbReference>
<dbReference type="SUPFAM" id="SSF52402">
    <property type="entry name" value="Adenine nucleotide alpha hydrolases-like"/>
    <property type="match status" value="1"/>
</dbReference>
<evidence type="ECO:0000250" key="1"/>
<evidence type="ECO:0000255" key="2">
    <source>
        <dbReference type="HAMAP-Rule" id="MF_00063"/>
    </source>
</evidence>
<organism>
    <name type="scientific">Escherichia coli O6:H1 (strain CFT073 / ATCC 700928 / UPEC)</name>
    <dbReference type="NCBI Taxonomy" id="199310"/>
    <lineage>
        <taxon>Bacteria</taxon>
        <taxon>Pseudomonadati</taxon>
        <taxon>Pseudomonadota</taxon>
        <taxon>Gammaproteobacteria</taxon>
        <taxon>Enterobacterales</taxon>
        <taxon>Enterobacteriaceae</taxon>
        <taxon>Escherichia</taxon>
    </lineage>
</organism>
<proteinExistence type="inferred from homology"/>
<sequence>MSKLDLNALNELPKVDRILALAETNAQLEKLDAEGRVAWALDNLPGEYVLSSSFGIQAAVSLHLVNQIRPDIPVILTDTGYLFPETYRFIDELTDKLKLNLKVYRATESAAWQEARYGKLWEQGVEGIEKYNDINKVEPMNRALKELNAQTWFAGLRREQSGSRANLPVLAIQRGVFKVLPIIDWDNRTIYQYLQKHGLKYHPLWDEGYLSVGDTHTTRKWEPGMAEEETRFFGLKRECGLHEG</sequence>
<gene>
    <name evidence="2" type="primary">cysH</name>
    <name type="ordered locus">c3321</name>
</gene>
<name>CYSH_ECOL6</name>
<feature type="initiator methionine" description="Removed" evidence="1">
    <location>
        <position position="1"/>
    </location>
</feature>
<feature type="chain" id="PRO_0000100631" description="Phosphoadenosine 5'-phosphosulfate reductase">
    <location>
        <begin position="2"/>
        <end position="244"/>
    </location>
</feature>
<feature type="active site" description="Nucleophile; cysteine thiosulfonate intermediate" evidence="2">
    <location>
        <position position="239"/>
    </location>
</feature>